<evidence type="ECO:0000255" key="1"/>
<evidence type="ECO:0000255" key="2">
    <source>
        <dbReference type="PROSITE-ProRule" id="PRU00368"/>
    </source>
</evidence>
<evidence type="ECO:0000256" key="3">
    <source>
        <dbReference type="SAM" id="MobiDB-lite"/>
    </source>
</evidence>
<evidence type="ECO:0000305" key="4"/>
<proteinExistence type="evidence at transcript level"/>
<protein>
    <recommendedName>
        <fullName>Complement C1q tumor necrosis factor-related protein 6</fullName>
    </recommendedName>
</protein>
<gene>
    <name type="primary">C1qtnf6</name>
</gene>
<comment type="subcellular location">
    <subcellularLocation>
        <location evidence="4">Secreted</location>
    </subcellularLocation>
</comment>
<organism>
    <name type="scientific">Rattus norvegicus</name>
    <name type="common">Rat</name>
    <dbReference type="NCBI Taxonomy" id="10116"/>
    <lineage>
        <taxon>Eukaryota</taxon>
        <taxon>Metazoa</taxon>
        <taxon>Chordata</taxon>
        <taxon>Craniata</taxon>
        <taxon>Vertebrata</taxon>
        <taxon>Euteleostomi</taxon>
        <taxon>Mammalia</taxon>
        <taxon>Eutheria</taxon>
        <taxon>Euarchontoglires</taxon>
        <taxon>Glires</taxon>
        <taxon>Rodentia</taxon>
        <taxon>Myomorpha</taxon>
        <taxon>Muroidea</taxon>
        <taxon>Muridae</taxon>
        <taxon>Murinae</taxon>
        <taxon>Rattus</taxon>
    </lineage>
</organism>
<keyword id="KW-0176">Collagen</keyword>
<keyword id="KW-0325">Glycoprotein</keyword>
<keyword id="KW-1185">Reference proteome</keyword>
<keyword id="KW-0964">Secreted</keyword>
<keyword id="KW-0732">Signal</keyword>
<feature type="signal peptide" evidence="1">
    <location>
        <begin position="1"/>
        <end position="24"/>
    </location>
</feature>
<feature type="chain" id="PRO_0000320085" description="Complement C1q tumor necrosis factor-related protein 6">
    <location>
        <begin position="25"/>
        <end position="263"/>
    </location>
</feature>
<feature type="domain" description="Collagen-like">
    <location>
        <begin position="82"/>
        <end position="123"/>
    </location>
</feature>
<feature type="domain" description="C1q" evidence="2">
    <location>
        <begin position="124"/>
        <end position="263"/>
    </location>
</feature>
<feature type="region of interest" description="Disordered" evidence="3">
    <location>
        <begin position="80"/>
        <end position="123"/>
    </location>
</feature>
<feature type="glycosylation site" description="N-linked (GlcNAc...) asparagine" evidence="1">
    <location>
        <position position="76"/>
    </location>
</feature>
<reference key="1">
    <citation type="journal article" date="2004" name="Genome Res.">
        <title>The status, quality, and expansion of the NIH full-length cDNA project: the Mammalian Gene Collection (MGC).</title>
        <authorList>
            <consortium name="The MGC Project Team"/>
        </authorList>
    </citation>
    <scope>NUCLEOTIDE SEQUENCE [LARGE SCALE MRNA]</scope>
    <source>
        <tissue>Prostate</tissue>
    </source>
</reference>
<dbReference type="EMBL" id="BC101907">
    <property type="protein sequence ID" value="AAI01908.1"/>
    <property type="molecule type" value="mRNA"/>
</dbReference>
<dbReference type="RefSeq" id="NP_001030104.1">
    <property type="nucleotide sequence ID" value="NM_001034932.1"/>
</dbReference>
<dbReference type="SMR" id="Q3T1I2"/>
<dbReference type="FunCoup" id="Q3T1I2">
    <property type="interactions" value="68"/>
</dbReference>
<dbReference type="STRING" id="10116.ENSRNOP00000009551"/>
<dbReference type="GlyCosmos" id="Q3T1I2">
    <property type="glycosylation" value="1 site, No reported glycans"/>
</dbReference>
<dbReference type="GlyGen" id="Q3T1I2">
    <property type="glycosylation" value="2 sites"/>
</dbReference>
<dbReference type="PhosphoSitePlus" id="Q3T1I2"/>
<dbReference type="PaxDb" id="10116-ENSRNOP00000009551"/>
<dbReference type="GeneID" id="315114"/>
<dbReference type="KEGG" id="rno:315114"/>
<dbReference type="UCSC" id="RGD:1307057">
    <property type="organism name" value="rat"/>
</dbReference>
<dbReference type="AGR" id="RGD:1307057"/>
<dbReference type="CTD" id="114904"/>
<dbReference type="RGD" id="1307057">
    <property type="gene designation" value="C1qtnf6"/>
</dbReference>
<dbReference type="VEuPathDB" id="HostDB:ENSRNOG00000007300"/>
<dbReference type="eggNOG" id="ENOG502QT5D">
    <property type="taxonomic scope" value="Eukaryota"/>
</dbReference>
<dbReference type="HOGENOM" id="CLU_001074_3_0_1"/>
<dbReference type="InParanoid" id="Q3T1I2"/>
<dbReference type="OrthoDB" id="6138508at2759"/>
<dbReference type="PhylomeDB" id="Q3T1I2"/>
<dbReference type="TreeFam" id="TF329591"/>
<dbReference type="PRO" id="PR:Q3T1I2"/>
<dbReference type="Proteomes" id="UP000002494">
    <property type="component" value="Chromosome 7"/>
</dbReference>
<dbReference type="Bgee" id="ENSRNOG00000007300">
    <property type="expression patterns" value="Expressed in quadriceps femoris and 18 other cell types or tissues"/>
</dbReference>
<dbReference type="ExpressionAtlas" id="Q3T1I2">
    <property type="expression patterns" value="baseline and differential"/>
</dbReference>
<dbReference type="GO" id="GO:0005581">
    <property type="term" value="C:collagen trimer"/>
    <property type="evidence" value="ECO:0007669"/>
    <property type="project" value="UniProtKB-KW"/>
</dbReference>
<dbReference type="GO" id="GO:0005737">
    <property type="term" value="C:cytoplasm"/>
    <property type="evidence" value="ECO:0000314"/>
    <property type="project" value="RGD"/>
</dbReference>
<dbReference type="GO" id="GO:0005615">
    <property type="term" value="C:extracellular space"/>
    <property type="evidence" value="ECO:0000266"/>
    <property type="project" value="RGD"/>
</dbReference>
<dbReference type="GO" id="GO:0032991">
    <property type="term" value="C:protein-containing complex"/>
    <property type="evidence" value="ECO:0000266"/>
    <property type="project" value="RGD"/>
</dbReference>
<dbReference type="GO" id="GO:0042802">
    <property type="term" value="F:identical protein binding"/>
    <property type="evidence" value="ECO:0000266"/>
    <property type="project" value="RGD"/>
</dbReference>
<dbReference type="FunFam" id="2.60.120.40:FF:000029">
    <property type="entry name" value="Complement C1q tumor necrosis factor-related protein 1"/>
    <property type="match status" value="1"/>
</dbReference>
<dbReference type="Gene3D" id="2.60.120.40">
    <property type="match status" value="1"/>
</dbReference>
<dbReference type="InterPro" id="IPR001073">
    <property type="entry name" value="C1q_dom"/>
</dbReference>
<dbReference type="InterPro" id="IPR008160">
    <property type="entry name" value="Collagen"/>
</dbReference>
<dbReference type="InterPro" id="IPR050392">
    <property type="entry name" value="Collagen/C1q_domain"/>
</dbReference>
<dbReference type="InterPro" id="IPR008983">
    <property type="entry name" value="Tumour_necrosis_fac-like_dom"/>
</dbReference>
<dbReference type="PANTHER" id="PTHR15427:SF52">
    <property type="entry name" value="C1Q DOMAIN-CONTAINING PROTEIN"/>
    <property type="match status" value="1"/>
</dbReference>
<dbReference type="PANTHER" id="PTHR15427">
    <property type="entry name" value="EMILIN ELASTIN MICROFIBRIL INTERFACE-LOCATED PROTEIN ELASTIN MICROFIBRIL INTERFACER"/>
    <property type="match status" value="1"/>
</dbReference>
<dbReference type="Pfam" id="PF00386">
    <property type="entry name" value="C1q"/>
    <property type="match status" value="1"/>
</dbReference>
<dbReference type="Pfam" id="PF01391">
    <property type="entry name" value="Collagen"/>
    <property type="match status" value="1"/>
</dbReference>
<dbReference type="PRINTS" id="PR00007">
    <property type="entry name" value="COMPLEMNTC1Q"/>
</dbReference>
<dbReference type="SMART" id="SM00110">
    <property type="entry name" value="C1Q"/>
    <property type="match status" value="1"/>
</dbReference>
<dbReference type="SUPFAM" id="SSF49842">
    <property type="entry name" value="TNF-like"/>
    <property type="match status" value="1"/>
</dbReference>
<dbReference type="PROSITE" id="PS50871">
    <property type="entry name" value="C1Q"/>
    <property type="match status" value="1"/>
</dbReference>
<accession>Q3T1I2</accession>
<name>C1QT6_RAT</name>
<sequence length="263" mass="28973">MRVIMGTASLGSIWAVFLLPLVFGVPTEEPTFGESVASHLPKNCQRCCDPEDPLSPADTVNAVPPYVLPEVRPYINITILKGDKGDRGPSGTPGKPGKNGTRGDRGSQGIKGDKGQAGSPGSSCQTHYSAFSVGRKTGLHSSENFLSLLFDRVFVNTDGHFDMATGRFVAPLRGLYFFSLNVHSWNYKETYVHIVHNEQAVVILYAQPSERSIMQSQSVMLPLVPGDYVWVRLFKRERENGIYSDDMDTYITFSGHLIKAEDN</sequence>